<keyword id="KW-0067">ATP-binding</keyword>
<keyword id="KW-0460">Magnesium</keyword>
<keyword id="KW-0464">Manganese</keyword>
<keyword id="KW-0479">Metal-binding</keyword>
<keyword id="KW-0496">Mitochondrion</keyword>
<keyword id="KW-0547">Nucleotide-binding</keyword>
<keyword id="KW-1185">Reference proteome</keyword>
<keyword id="KW-0809">Transit peptide</keyword>
<keyword id="KW-0816">Tricarboxylic acid cycle</keyword>
<sequence>MLAAGSCSVRTILQPALLLGHSREVVCELVTSFRNFCSKYSVPPSPKYGGKHTVTMIPGDGIGPELMVHVKRIFRSNCVPVEFEEVWATSTSSEEEINNALMAIRRNRITLKGNIATNHHLPAKYKSHNTKFRTALDLYASVVHFKTFPGVETRHKDIDILVVRENTEGEYTNLEHESVRGVVESLKIVTKTKSVRIADYAFRLAQKMGRKKVTVVHKANIMKLGDGLFLQCCKDVAAHYPQITLESMIIDNTAMQLVSKPQQFDVMLMPNLYGNIINSVCTGLVGGSGIVPGANYGDSYAIFETGSKEIGQDLAHRNIANPVAMLLTSCIMLDYLDLQLYAAHIRSAVMASLQNKSICTPDIGGQGTTAGVVEYILDHMKDQNSGCQPRFFLST</sequence>
<proteinExistence type="evidence at transcript level"/>
<evidence type="ECO:0000250" key="1"/>
<evidence type="ECO:0000250" key="2">
    <source>
        <dbReference type="UniProtKB" id="P51553"/>
    </source>
</evidence>
<evidence type="ECO:0000255" key="3"/>
<evidence type="ECO:0000305" key="4"/>
<protein>
    <recommendedName>
        <fullName>Probable isocitrate dehydrogenase [NAD] gamma 2, mitochondrial</fullName>
    </recommendedName>
    <alternativeName>
        <fullName>Isocitric dehydrogenase subunit gamma 2</fullName>
    </alternativeName>
    <alternativeName>
        <fullName>NAD(+)-specific ICDH subunit gamma 2</fullName>
    </alternativeName>
</protein>
<feature type="transit peptide" description="Mitochondrion" evidence="3">
    <location>
        <begin position="1"/>
        <end position="25"/>
    </location>
</feature>
<feature type="chain" id="PRO_0000401934" description="Probable isocitrate dehydrogenase [NAD] gamma 2, mitochondrial">
    <location>
        <begin position="26"/>
        <end position="395"/>
    </location>
</feature>
<feature type="binding site" evidence="2">
    <location>
        <position position="117"/>
    </location>
    <ligand>
        <name>citrate</name>
        <dbReference type="ChEBI" id="CHEBI:16947"/>
        <note>allosteric activator</note>
    </ligand>
</feature>
<feature type="binding site" evidence="2">
    <location>
        <position position="133"/>
    </location>
    <ligand>
        <name>substrate</name>
    </ligand>
</feature>
<feature type="binding site" evidence="2">
    <location>
        <position position="164"/>
    </location>
    <ligand>
        <name>substrate</name>
    </ligand>
</feature>
<feature type="binding site" evidence="2">
    <location>
        <position position="251"/>
    </location>
    <ligand>
        <name>Mn(2+)</name>
        <dbReference type="ChEBI" id="CHEBI:29035"/>
        <note>ligand shared with catalytic subunit</note>
    </ligand>
</feature>
<feature type="binding site" evidence="2">
    <location>
        <position position="251"/>
    </location>
    <ligand>
        <name>substrate</name>
    </ligand>
</feature>
<feature type="binding site" evidence="2">
    <location>
        <position position="321"/>
    </location>
    <ligand>
        <name>ADP</name>
        <dbReference type="ChEBI" id="CHEBI:456216"/>
        <note>allosteric activator</note>
    </ligand>
</feature>
<reference key="1">
    <citation type="submission" date="2005-09" db="EMBL/GenBank/DDBJ databases">
        <authorList>
            <person name="Mural R.J."/>
            <person name="Adams M.D."/>
            <person name="Myers E.W."/>
            <person name="Smith H.O."/>
            <person name="Venter J.C."/>
        </authorList>
    </citation>
    <scope>NUCLEOTIDE SEQUENCE [LARGE SCALE GENOMIC DNA]</scope>
    <source>
        <strain>Brown Norway</strain>
    </source>
</reference>
<reference key="2">
    <citation type="journal article" date="2004" name="Genome Res.">
        <title>The status, quality, and expansion of the NIH full-length cDNA project: the Mammalian Gene Collection (MGC).</title>
        <authorList>
            <consortium name="The MGC Project Team"/>
        </authorList>
    </citation>
    <scope>NUCLEOTIDE SEQUENCE [LARGE SCALE MRNA]</scope>
    <source>
        <tissue>Testis</tissue>
    </source>
</reference>
<name>IDHG2_RAT</name>
<dbReference type="EMBL" id="CH473979">
    <property type="protein sequence ID" value="EDM07215.1"/>
    <property type="molecule type" value="Genomic_DNA"/>
</dbReference>
<dbReference type="EMBL" id="BC098006">
    <property type="protein sequence ID" value="AAH98006.1"/>
    <property type="molecule type" value="mRNA"/>
</dbReference>
<dbReference type="RefSeq" id="NP_001096833.1">
    <property type="nucleotide sequence ID" value="NM_001103363.1"/>
</dbReference>
<dbReference type="RefSeq" id="XP_008757687.1">
    <property type="nucleotide sequence ID" value="XM_008759465.2"/>
</dbReference>
<dbReference type="SMR" id="Q4QQT5"/>
<dbReference type="FunCoup" id="Q4QQT5">
    <property type="interactions" value="377"/>
</dbReference>
<dbReference type="STRING" id="10116.ENSRNOP00000066907"/>
<dbReference type="jPOST" id="Q4QQT5"/>
<dbReference type="PaxDb" id="10116-ENSRNOP00000066907"/>
<dbReference type="GeneID" id="100125384"/>
<dbReference type="KEGG" id="rno:100125384"/>
<dbReference type="UCSC" id="RGD:1642415">
    <property type="organism name" value="rat"/>
</dbReference>
<dbReference type="AGR" id="RGD:1642415"/>
<dbReference type="CTD" id="100125384"/>
<dbReference type="RGD" id="1642415">
    <property type="gene designation" value="LOC100125384"/>
</dbReference>
<dbReference type="eggNOG" id="KOG0784">
    <property type="taxonomic scope" value="Eukaryota"/>
</dbReference>
<dbReference type="HOGENOM" id="CLU_031953_0_0_1"/>
<dbReference type="InParanoid" id="Q4QQT5"/>
<dbReference type="OrthoDB" id="62710at9989"/>
<dbReference type="PhylomeDB" id="Q4QQT5"/>
<dbReference type="PRO" id="PR:Q4QQT5"/>
<dbReference type="Proteomes" id="UP000002494">
    <property type="component" value="Chromosome 1"/>
</dbReference>
<dbReference type="Proteomes" id="UP000234681">
    <property type="component" value="Chromosome 1"/>
</dbReference>
<dbReference type="Bgee" id="ENSRNOG00000045720">
    <property type="expression patterns" value="Expressed in testis"/>
</dbReference>
<dbReference type="GO" id="GO:0005739">
    <property type="term" value="C:mitochondrion"/>
    <property type="evidence" value="ECO:0000318"/>
    <property type="project" value="GO_Central"/>
</dbReference>
<dbReference type="GO" id="GO:0005524">
    <property type="term" value="F:ATP binding"/>
    <property type="evidence" value="ECO:0007669"/>
    <property type="project" value="UniProtKB-KW"/>
</dbReference>
<dbReference type="GO" id="GO:0000287">
    <property type="term" value="F:magnesium ion binding"/>
    <property type="evidence" value="ECO:0000250"/>
    <property type="project" value="UniProtKB"/>
</dbReference>
<dbReference type="GO" id="GO:0006102">
    <property type="term" value="P:isocitrate metabolic process"/>
    <property type="evidence" value="ECO:0000318"/>
    <property type="project" value="GO_Central"/>
</dbReference>
<dbReference type="GO" id="GO:0006099">
    <property type="term" value="P:tricarboxylic acid cycle"/>
    <property type="evidence" value="ECO:0000318"/>
    <property type="project" value="GO_Central"/>
</dbReference>
<dbReference type="FunFam" id="3.40.718.10:FF:000001">
    <property type="entry name" value="Isocitrate dehydrogenase [NAD] subunit, mitochondrial"/>
    <property type="match status" value="1"/>
</dbReference>
<dbReference type="Gene3D" id="3.40.718.10">
    <property type="entry name" value="Isopropylmalate Dehydrogenase"/>
    <property type="match status" value="1"/>
</dbReference>
<dbReference type="InterPro" id="IPR004434">
    <property type="entry name" value="Isocitrate_DH_NAD"/>
</dbReference>
<dbReference type="InterPro" id="IPR024084">
    <property type="entry name" value="IsoPropMal-DH-like_dom"/>
</dbReference>
<dbReference type="NCBIfam" id="TIGR00175">
    <property type="entry name" value="mito_nad_idh"/>
    <property type="match status" value="1"/>
</dbReference>
<dbReference type="PANTHER" id="PTHR11835">
    <property type="entry name" value="DECARBOXYLATING DEHYDROGENASES-ISOCITRATE, ISOPROPYLMALATE, TARTRATE"/>
    <property type="match status" value="1"/>
</dbReference>
<dbReference type="PANTHER" id="PTHR11835:SF54">
    <property type="entry name" value="ISOCITRATE DEHYDROGENASE [NAD] GAMMA 2, MITOCHONDRIAL-RELATED"/>
    <property type="match status" value="1"/>
</dbReference>
<dbReference type="Pfam" id="PF00180">
    <property type="entry name" value="Iso_dh"/>
    <property type="match status" value="1"/>
</dbReference>
<dbReference type="SMART" id="SM01329">
    <property type="entry name" value="Iso_dh"/>
    <property type="match status" value="1"/>
</dbReference>
<dbReference type="SUPFAM" id="SSF53659">
    <property type="entry name" value="Isocitrate/Isopropylmalate dehydrogenase-like"/>
    <property type="match status" value="1"/>
</dbReference>
<organism>
    <name type="scientific">Rattus norvegicus</name>
    <name type="common">Rat</name>
    <dbReference type="NCBI Taxonomy" id="10116"/>
    <lineage>
        <taxon>Eukaryota</taxon>
        <taxon>Metazoa</taxon>
        <taxon>Chordata</taxon>
        <taxon>Craniata</taxon>
        <taxon>Vertebrata</taxon>
        <taxon>Euteleostomi</taxon>
        <taxon>Mammalia</taxon>
        <taxon>Eutheria</taxon>
        <taxon>Euarchontoglires</taxon>
        <taxon>Glires</taxon>
        <taxon>Rodentia</taxon>
        <taxon>Myomorpha</taxon>
        <taxon>Muroidea</taxon>
        <taxon>Muridae</taxon>
        <taxon>Murinae</taxon>
        <taxon>Rattus</taxon>
    </lineage>
</organism>
<accession>Q4QQT5</accession>
<comment type="function">
    <text evidence="2">Regulatory subunit which plays a role in the allosteric regulation of the enzyme catalyzing the decarboxylation of isocitrate (ICT) into alpha-ketoglutarate. The heterodimer composed of the alpha (IDH3A) and beta (IDH3B) subunits and the heterodimer composed of the alpha (IDH3A) and gamma (IDH3G) subunits, have considerable basal activity but the full activity of the heterotetramer (containing two subunits of IDH3A, one of IDH3B and one of IDH3G) requires the assembly and cooperative function of both heterodimers.</text>
</comment>
<comment type="cofactor">
    <cofactor evidence="2">
        <name>Mg(2+)</name>
        <dbReference type="ChEBI" id="CHEBI:18420"/>
    </cofactor>
    <cofactor evidence="2">
        <name>Mn(2+)</name>
        <dbReference type="ChEBI" id="CHEBI:29035"/>
    </cofactor>
    <text evidence="2">Divalent metal cations; Mn(2+) or Mg(2+). Activity higher in presence of Mn(2+) than of Mg(2+). Binds 1 Mg(2+) or Mn(2+) ion per subunit.</text>
</comment>
<comment type="activity regulation">
    <text evidence="2">The heterotetramer and the heterodimer composed of IDH3A and IDH3G subunits can be allosterically activated by citrate (CIT) or/and ADP, and the two activators can act independently or synergistically. The heterodimer composed of IDH3A and IDH3B subunits cannot be allosterically regulated and the allosteric regulation of the heterotetramer is through the IDH3G subunit and not the IDH3B subunit. The IDH3G subunit contains the allosteric site which consists of a CIT-binding site and an ADP-binding site, and the binding of CIT and ADP causes conformational changes at the allosteric site which are transmitted to the active site in the catalytic subunit (IDH3A) through a cascade of conformational changes at the heterodimer interface, leading to stabilization of the isocitrate-binding at the active site and thus activation of the enzyme. ATP can activate the heterotetramer and the heterodimer composed of IDH3A and IDH3G subunits at low concentrations but inhibits their activities at high concentrations, whereas ATP exhibits only inhibitory effect on the heterodimer composed of IDH3A and IDH3B subunits.</text>
</comment>
<comment type="subunit">
    <text evidence="2">Heterooligomer of subunits alpha (IDH3A), beta (IDH3B), and gamma (IDH3G) in the apparent ratio of 2:1:1. The heterodimer containing one IDH3A and one IDH3B subunit and the heterodimer containing one IDH3A and one IDH3G subunit assemble into a heterotetramer (which contains two subunits of IDH3A, one of IDH3B and one of IDH3G) and further into the heterooctamer.</text>
</comment>
<comment type="subcellular location">
    <subcellularLocation>
        <location evidence="1">Mitochondrion</location>
    </subcellularLocation>
</comment>
<comment type="similarity">
    <text evidence="4">Belongs to the isocitrate and isopropylmalate dehydrogenases family.</text>
</comment>